<organism>
    <name type="scientific">Escherichia coli O6:H1 (strain CFT073 / ATCC 700928 / UPEC)</name>
    <dbReference type="NCBI Taxonomy" id="199310"/>
    <lineage>
        <taxon>Bacteria</taxon>
        <taxon>Pseudomonadati</taxon>
        <taxon>Pseudomonadota</taxon>
        <taxon>Gammaproteobacteria</taxon>
        <taxon>Enterobacterales</taxon>
        <taxon>Enterobacteriaceae</taxon>
        <taxon>Escherichia</taxon>
    </lineage>
</organism>
<name>IRAM_ECOL6</name>
<reference key="1">
    <citation type="journal article" date="2002" name="Proc. Natl. Acad. Sci. U.S.A.">
        <title>Extensive mosaic structure revealed by the complete genome sequence of uropathogenic Escherichia coli.</title>
        <authorList>
            <person name="Welch R.A."/>
            <person name="Burland V."/>
            <person name="Plunkett G. III"/>
            <person name="Redford P."/>
            <person name="Roesch P."/>
            <person name="Rasko D."/>
            <person name="Buckles E.L."/>
            <person name="Liou S.-R."/>
            <person name="Boutin A."/>
            <person name="Hackett J."/>
            <person name="Stroud D."/>
            <person name="Mayhew G.F."/>
            <person name="Rose D.J."/>
            <person name="Zhou S."/>
            <person name="Schwartz D.C."/>
            <person name="Perna N.T."/>
            <person name="Mobley H.L.T."/>
            <person name="Donnenberg M.S."/>
            <person name="Blattner F.R."/>
        </authorList>
    </citation>
    <scope>NUCLEOTIDE SEQUENCE [LARGE SCALE GENOMIC DNA]</scope>
    <source>
        <strain>CFT073 / ATCC 700928 / UPEC</strain>
    </source>
</reference>
<comment type="function">
    <text evidence="1">Inhibits RpoS proteolysis by regulating RssB activity, thereby increasing the stability of the sigma stress factor RpoS during magnesium starvation.</text>
</comment>
<comment type="subcellular location">
    <subcellularLocation>
        <location evidence="1">Cytoplasm</location>
    </subcellularLocation>
</comment>
<comment type="similarity">
    <text evidence="1">Belongs to the IraM/RssC family.</text>
</comment>
<accession>Q8FIJ3</accession>
<sequence length="111" mass="12769">MKWIVIDTVIQPSCGISFSVIWSKIKLIIWYQSDAFLPPESIFTLTHTGIMLNNKVLPVTIYNVVPFNKTFWNLIKNSQECPTNTDNVLNECFNNRCTLQICPYGLKQQSP</sequence>
<evidence type="ECO:0000255" key="1">
    <source>
        <dbReference type="HAMAP-Rule" id="MF_01199"/>
    </source>
</evidence>
<dbReference type="EMBL" id="AE014075">
    <property type="protein sequence ID" value="AAN79898.1"/>
    <property type="molecule type" value="Genomic_DNA"/>
</dbReference>
<dbReference type="RefSeq" id="WP_000871291.1">
    <property type="nucleotide sequence ID" value="NZ_CP051263.1"/>
</dbReference>
<dbReference type="SMR" id="Q8FIJ3"/>
<dbReference type="STRING" id="199310.c1429"/>
<dbReference type="KEGG" id="ecc:c1429"/>
<dbReference type="eggNOG" id="ENOG50331R2">
    <property type="taxonomic scope" value="Bacteria"/>
</dbReference>
<dbReference type="HOGENOM" id="CLU_143527_1_0_6"/>
<dbReference type="BioCyc" id="ECOL199310:C1429-MONOMER"/>
<dbReference type="Proteomes" id="UP000001410">
    <property type="component" value="Chromosome"/>
</dbReference>
<dbReference type="GO" id="GO:0005737">
    <property type="term" value="C:cytoplasm"/>
    <property type="evidence" value="ECO:0007669"/>
    <property type="project" value="UniProtKB-SubCell"/>
</dbReference>
<dbReference type="GO" id="GO:0009267">
    <property type="term" value="P:cellular response to starvation"/>
    <property type="evidence" value="ECO:0007669"/>
    <property type="project" value="UniProtKB-UniRule"/>
</dbReference>
<dbReference type="Gene3D" id="2.40.50.650">
    <property type="match status" value="1"/>
</dbReference>
<dbReference type="HAMAP" id="MF_01199">
    <property type="entry name" value="Anti_adapt_IraM"/>
    <property type="match status" value="1"/>
</dbReference>
<dbReference type="InterPro" id="IPR014448">
    <property type="entry name" value="Anti-adapter_IraM"/>
</dbReference>
<dbReference type="InterPro" id="IPR038679">
    <property type="entry name" value="PmrD_sf"/>
</dbReference>
<dbReference type="NCBIfam" id="NF007393">
    <property type="entry name" value="PRK09919.1"/>
    <property type="match status" value="1"/>
</dbReference>
<dbReference type="PIRSF" id="PIRSF007036">
    <property type="entry name" value="Elb1"/>
    <property type="match status" value="1"/>
</dbReference>
<keyword id="KW-0963">Cytoplasm</keyword>
<keyword id="KW-1185">Reference proteome</keyword>
<keyword id="KW-0346">Stress response</keyword>
<proteinExistence type="inferred from homology"/>
<protein>
    <recommendedName>
        <fullName evidence="1">Anti-adapter protein IraM</fullName>
    </recommendedName>
</protein>
<feature type="chain" id="PRO_0000337883" description="Anti-adapter protein IraM">
    <location>
        <begin position="1"/>
        <end position="111"/>
    </location>
</feature>
<gene>
    <name evidence="1" type="primary">iraM</name>
    <name type="ordered locus">c1429</name>
</gene>